<feature type="chain" id="PRO_1000148251" description="Phosphopentomutase">
    <location>
        <begin position="1"/>
        <end position="396"/>
    </location>
</feature>
<feature type="binding site" evidence="1">
    <location>
        <position position="14"/>
    </location>
    <ligand>
        <name>Mn(2+)</name>
        <dbReference type="ChEBI" id="CHEBI:29035"/>
        <label>1</label>
    </ligand>
</feature>
<feature type="binding site" evidence="1">
    <location>
        <position position="286"/>
    </location>
    <ligand>
        <name>Mn(2+)</name>
        <dbReference type="ChEBI" id="CHEBI:29035"/>
        <label>2</label>
    </ligand>
</feature>
<feature type="binding site" evidence="1">
    <location>
        <position position="291"/>
    </location>
    <ligand>
        <name>Mn(2+)</name>
        <dbReference type="ChEBI" id="CHEBI:29035"/>
        <label>2</label>
    </ligand>
</feature>
<feature type="binding site" evidence="1">
    <location>
        <position position="327"/>
    </location>
    <ligand>
        <name>Mn(2+)</name>
        <dbReference type="ChEBI" id="CHEBI:29035"/>
        <label>1</label>
    </ligand>
</feature>
<feature type="binding site" evidence="1">
    <location>
        <position position="328"/>
    </location>
    <ligand>
        <name>Mn(2+)</name>
        <dbReference type="ChEBI" id="CHEBI:29035"/>
        <label>1</label>
    </ligand>
</feature>
<feature type="binding site" evidence="1">
    <location>
        <position position="339"/>
    </location>
    <ligand>
        <name>Mn(2+)</name>
        <dbReference type="ChEBI" id="CHEBI:29035"/>
        <label>2</label>
    </ligand>
</feature>
<evidence type="ECO:0000255" key="1">
    <source>
        <dbReference type="HAMAP-Rule" id="MF_00740"/>
    </source>
</evidence>
<gene>
    <name evidence="1" type="primary">deoB</name>
    <name type="ordered locus">Sca_2011</name>
</gene>
<comment type="function">
    <text evidence="1">Isomerase that catalyzes the conversion of deoxy-ribose 1-phosphate (dRib-1-P) and ribose 1-phosphate (Rib-1-P) to deoxy-ribose 5-phosphate (dRib-5-P) and ribose 5-phosphate (Rib-5-P), respectively.</text>
</comment>
<comment type="catalytic activity">
    <reaction evidence="1">
        <text>2-deoxy-alpha-D-ribose 1-phosphate = 2-deoxy-D-ribose 5-phosphate</text>
        <dbReference type="Rhea" id="RHEA:27658"/>
        <dbReference type="ChEBI" id="CHEBI:57259"/>
        <dbReference type="ChEBI" id="CHEBI:62877"/>
        <dbReference type="EC" id="5.4.2.7"/>
    </reaction>
</comment>
<comment type="catalytic activity">
    <reaction evidence="1">
        <text>alpha-D-ribose 1-phosphate = D-ribose 5-phosphate</text>
        <dbReference type="Rhea" id="RHEA:18793"/>
        <dbReference type="ChEBI" id="CHEBI:57720"/>
        <dbReference type="ChEBI" id="CHEBI:78346"/>
        <dbReference type="EC" id="5.4.2.7"/>
    </reaction>
</comment>
<comment type="cofactor">
    <cofactor evidence="1">
        <name>Mn(2+)</name>
        <dbReference type="ChEBI" id="CHEBI:29035"/>
    </cofactor>
    <text evidence="1">Binds 2 manganese ions.</text>
</comment>
<comment type="pathway">
    <text evidence="1">Carbohydrate degradation; 2-deoxy-D-ribose 1-phosphate degradation; D-glyceraldehyde 3-phosphate and acetaldehyde from 2-deoxy-alpha-D-ribose 1-phosphate: step 1/2.</text>
</comment>
<comment type="subcellular location">
    <subcellularLocation>
        <location evidence="1">Cytoplasm</location>
    </subcellularLocation>
</comment>
<comment type="similarity">
    <text evidence="1">Belongs to the phosphopentomutase family.</text>
</comment>
<organism>
    <name type="scientific">Staphylococcus carnosus (strain TM300)</name>
    <dbReference type="NCBI Taxonomy" id="396513"/>
    <lineage>
        <taxon>Bacteria</taxon>
        <taxon>Bacillati</taxon>
        <taxon>Bacillota</taxon>
        <taxon>Bacilli</taxon>
        <taxon>Bacillales</taxon>
        <taxon>Staphylococcaceae</taxon>
        <taxon>Staphylococcus</taxon>
    </lineage>
</organism>
<accession>B9DKM0</accession>
<name>DEOB_STACT</name>
<sequence length="396" mass="44366">MTTPFKRIHLIVMDSVGIGEGPDAAAFNDEGSHTLKHTLEGFEQDLPNLQRLGLGNIAPLPVVEEVEQPEAFYTKLSEASVGKDTMTGHWEIMGLNIMQPFKVYPDGFPDELVKEIEDMTGRKVVANRPASGTQIIDEWGEHQMKTGDLIVYTSADPVLQIAAHEDVIPLEELYDICEKVRELTKDPKYLIGRIIARPYVGEPGNFTRTSNRHDYALKPFGRTVMNELKDNNYDVIAIGKINDIYDGEGVTEAIRTKNNMDGMDKLIDVVKHDFTGISFLNLVDFDALYGHRRDKEGYAQAIKDFDERLPELIDNLQEDDLVIITADHGNDPIAPGTDHTREYIPVLLYSPKLKDKAHELSGDTTFSSIGATIADNFDVPLPEYGRSFLSEMNVEK</sequence>
<keyword id="KW-0963">Cytoplasm</keyword>
<keyword id="KW-0413">Isomerase</keyword>
<keyword id="KW-0464">Manganese</keyword>
<keyword id="KW-0479">Metal-binding</keyword>
<keyword id="KW-1185">Reference proteome</keyword>
<proteinExistence type="inferred from homology"/>
<protein>
    <recommendedName>
        <fullName evidence="1">Phosphopentomutase</fullName>
        <ecNumber evidence="1">5.4.2.7</ecNumber>
    </recommendedName>
    <alternativeName>
        <fullName evidence="1">Phosphodeoxyribomutase</fullName>
    </alternativeName>
</protein>
<reference key="1">
    <citation type="journal article" date="2009" name="Appl. Environ. Microbiol.">
        <title>Genome analysis of the meat starter culture bacterium Staphylococcus carnosus TM300.</title>
        <authorList>
            <person name="Rosenstein R."/>
            <person name="Nerz C."/>
            <person name="Biswas L."/>
            <person name="Resch A."/>
            <person name="Raddatz G."/>
            <person name="Schuster S.C."/>
            <person name="Goetz F."/>
        </authorList>
    </citation>
    <scope>NUCLEOTIDE SEQUENCE [LARGE SCALE GENOMIC DNA]</scope>
    <source>
        <strain>TM300</strain>
    </source>
</reference>
<dbReference type="EC" id="5.4.2.7" evidence="1"/>
<dbReference type="EMBL" id="AM295250">
    <property type="protein sequence ID" value="CAL28916.1"/>
    <property type="molecule type" value="Genomic_DNA"/>
</dbReference>
<dbReference type="RefSeq" id="WP_015901252.1">
    <property type="nucleotide sequence ID" value="NC_012121.1"/>
</dbReference>
<dbReference type="SMR" id="B9DKM0"/>
<dbReference type="GeneID" id="93794465"/>
<dbReference type="KEGG" id="sca:SCA_2011"/>
<dbReference type="eggNOG" id="COG1015">
    <property type="taxonomic scope" value="Bacteria"/>
</dbReference>
<dbReference type="HOGENOM" id="CLU_053861_0_0_9"/>
<dbReference type="OrthoDB" id="9769930at2"/>
<dbReference type="BioCyc" id="SCAR396513:SCA_RS10180-MONOMER"/>
<dbReference type="UniPathway" id="UPA00002">
    <property type="reaction ID" value="UER00467"/>
</dbReference>
<dbReference type="Proteomes" id="UP000000444">
    <property type="component" value="Chromosome"/>
</dbReference>
<dbReference type="GO" id="GO:0005829">
    <property type="term" value="C:cytosol"/>
    <property type="evidence" value="ECO:0007669"/>
    <property type="project" value="TreeGrafter"/>
</dbReference>
<dbReference type="GO" id="GO:0000287">
    <property type="term" value="F:magnesium ion binding"/>
    <property type="evidence" value="ECO:0007669"/>
    <property type="project" value="InterPro"/>
</dbReference>
<dbReference type="GO" id="GO:0030145">
    <property type="term" value="F:manganese ion binding"/>
    <property type="evidence" value="ECO:0007669"/>
    <property type="project" value="UniProtKB-UniRule"/>
</dbReference>
<dbReference type="GO" id="GO:0008973">
    <property type="term" value="F:phosphopentomutase activity"/>
    <property type="evidence" value="ECO:0007669"/>
    <property type="project" value="UniProtKB-UniRule"/>
</dbReference>
<dbReference type="GO" id="GO:0006018">
    <property type="term" value="P:2-deoxyribose 1-phosphate catabolic process"/>
    <property type="evidence" value="ECO:0007669"/>
    <property type="project" value="UniProtKB-UniRule"/>
</dbReference>
<dbReference type="GO" id="GO:0006015">
    <property type="term" value="P:5-phosphoribose 1-diphosphate biosynthetic process"/>
    <property type="evidence" value="ECO:0007669"/>
    <property type="project" value="UniProtKB-UniPathway"/>
</dbReference>
<dbReference type="GO" id="GO:0043094">
    <property type="term" value="P:metabolic compound salvage"/>
    <property type="evidence" value="ECO:0007669"/>
    <property type="project" value="InterPro"/>
</dbReference>
<dbReference type="GO" id="GO:0009117">
    <property type="term" value="P:nucleotide metabolic process"/>
    <property type="evidence" value="ECO:0007669"/>
    <property type="project" value="InterPro"/>
</dbReference>
<dbReference type="CDD" id="cd16009">
    <property type="entry name" value="PPM"/>
    <property type="match status" value="1"/>
</dbReference>
<dbReference type="FunFam" id="3.30.70.1250:FF:000001">
    <property type="entry name" value="Phosphopentomutase"/>
    <property type="match status" value="1"/>
</dbReference>
<dbReference type="Gene3D" id="3.40.720.10">
    <property type="entry name" value="Alkaline Phosphatase, subunit A"/>
    <property type="match status" value="1"/>
</dbReference>
<dbReference type="Gene3D" id="3.30.70.1250">
    <property type="entry name" value="Phosphopentomutase"/>
    <property type="match status" value="1"/>
</dbReference>
<dbReference type="HAMAP" id="MF_00740">
    <property type="entry name" value="Phosphopentomut"/>
    <property type="match status" value="1"/>
</dbReference>
<dbReference type="InterPro" id="IPR017850">
    <property type="entry name" value="Alkaline_phosphatase_core_sf"/>
</dbReference>
<dbReference type="InterPro" id="IPR010045">
    <property type="entry name" value="DeoB"/>
</dbReference>
<dbReference type="InterPro" id="IPR006124">
    <property type="entry name" value="Metalloenzyme"/>
</dbReference>
<dbReference type="InterPro" id="IPR024052">
    <property type="entry name" value="Phosphopentomutase_DeoB_cap_sf"/>
</dbReference>
<dbReference type="NCBIfam" id="TIGR01696">
    <property type="entry name" value="deoB"/>
    <property type="match status" value="1"/>
</dbReference>
<dbReference type="NCBIfam" id="NF003766">
    <property type="entry name" value="PRK05362.1"/>
    <property type="match status" value="1"/>
</dbReference>
<dbReference type="PANTHER" id="PTHR21110">
    <property type="entry name" value="PHOSPHOPENTOMUTASE"/>
    <property type="match status" value="1"/>
</dbReference>
<dbReference type="PANTHER" id="PTHR21110:SF0">
    <property type="entry name" value="PHOSPHOPENTOMUTASE"/>
    <property type="match status" value="1"/>
</dbReference>
<dbReference type="Pfam" id="PF01676">
    <property type="entry name" value="Metalloenzyme"/>
    <property type="match status" value="1"/>
</dbReference>
<dbReference type="PIRSF" id="PIRSF001491">
    <property type="entry name" value="Ppentomutase"/>
    <property type="match status" value="1"/>
</dbReference>
<dbReference type="SUPFAM" id="SSF53649">
    <property type="entry name" value="Alkaline phosphatase-like"/>
    <property type="match status" value="1"/>
</dbReference>
<dbReference type="SUPFAM" id="SSF143856">
    <property type="entry name" value="DeoB insert domain-like"/>
    <property type="match status" value="1"/>
</dbReference>